<name>P4HTM_MOUSE</name>
<accession>Q8BG58</accession>
<accession>Q8CAF1</accession>
<accession>Q9D499</accession>
<evidence type="ECO:0000250" key="1"/>
<evidence type="ECO:0000250" key="2">
    <source>
        <dbReference type="UniProtKB" id="Q9NXG6"/>
    </source>
</evidence>
<evidence type="ECO:0000255" key="3"/>
<evidence type="ECO:0000255" key="4">
    <source>
        <dbReference type="PROSITE-ProRule" id="PRU00805"/>
    </source>
</evidence>
<evidence type="ECO:0000255" key="5">
    <source>
        <dbReference type="PROSITE-ProRule" id="PRU10142"/>
    </source>
</evidence>
<evidence type="ECO:0000256" key="6">
    <source>
        <dbReference type="SAM" id="MobiDB-lite"/>
    </source>
</evidence>
<evidence type="ECO:0000269" key="7">
    <source>
    </source>
</evidence>
<evidence type="ECO:0000303" key="8">
    <source>
    </source>
</evidence>
<evidence type="ECO:0000305" key="9"/>
<gene>
    <name type="primary">P4htm</name>
    <name type="synonym">Ph4</name>
</gene>
<keyword id="KW-0025">Alternative splicing</keyword>
<keyword id="KW-0106">Calcium</keyword>
<keyword id="KW-0223">Dioxygenase</keyword>
<keyword id="KW-0256">Endoplasmic reticulum</keyword>
<keyword id="KW-0325">Glycoprotein</keyword>
<keyword id="KW-0408">Iron</keyword>
<keyword id="KW-0472">Membrane</keyword>
<keyword id="KW-0479">Metal-binding</keyword>
<keyword id="KW-0560">Oxidoreductase</keyword>
<keyword id="KW-1185">Reference proteome</keyword>
<keyword id="KW-0677">Repeat</keyword>
<keyword id="KW-0735">Signal-anchor</keyword>
<keyword id="KW-0812">Transmembrane</keyword>
<keyword id="KW-1133">Transmembrane helix</keyword>
<keyword id="KW-0847">Vitamin C</keyword>
<keyword id="KW-0862">Zinc</keyword>
<keyword id="KW-0863">Zinc-finger</keyword>
<sequence>MAAAVATVQRPEAETVEEASNLQWPLPPEHRPSGAATRPGDSEDAPVRPLCKPRGICSRAYFLVLMVFVHLYLGNVLALLLFVHYSNGDESTDPGPQRREQSPQPVPTLGPLTRLEGIKVGYERKVQVVAGRDHFIRTLSLKPLLFEIPGFLSDEECRLIIHLAQMKGLQRSQILPTEEYEEAMSAMQVSQLDLFQLLDQNHDGRLQLREVLAQTRLGNGRWMTPENIQEMYSAIKADPDGDGVLSLQEFSNMDLRDFHKYMRSHKAESNELVRNSHHTWLHQGEGAHHVMRAIRQRVLRLTRLSPEIVEFSEPLQVVRYGEGGHYHAHVDSGPVYPETICSHTKLVANESVPFETSCRYMTVLFYLNNVTGGGETVFPVADNRTYDEMSLIQDDVDLRDTRRHCDKGNLRVKPQQGTAVFWYNYLPDGQGWVGEVDDYSLHGGCLVTRGTKWIANNWINVDPSRARQALFQQEMARLAREGGMDSQPEWALDRAYSDARVEL</sequence>
<protein>
    <recommendedName>
        <fullName>Transmembrane prolyl 4-hydroxylase</fullName>
        <shortName>P4H-TM</shortName>
        <ecNumber evidence="2">1.14.11.29</ecNumber>
    </recommendedName>
    <alternativeName>
        <fullName>Hypoxia-inducible factor prolyl hydroxylase 4</fullName>
        <shortName>HIF-PH4</shortName>
        <shortName>HIF-prolyl hydroxylase 4</shortName>
        <shortName>HPH-4</shortName>
    </alternativeName>
</protein>
<proteinExistence type="evidence at protein level"/>
<organism>
    <name type="scientific">Mus musculus</name>
    <name type="common">Mouse</name>
    <dbReference type="NCBI Taxonomy" id="10090"/>
    <lineage>
        <taxon>Eukaryota</taxon>
        <taxon>Metazoa</taxon>
        <taxon>Chordata</taxon>
        <taxon>Craniata</taxon>
        <taxon>Vertebrata</taxon>
        <taxon>Euteleostomi</taxon>
        <taxon>Mammalia</taxon>
        <taxon>Eutheria</taxon>
        <taxon>Euarchontoglires</taxon>
        <taxon>Glires</taxon>
        <taxon>Rodentia</taxon>
        <taxon>Myomorpha</taxon>
        <taxon>Muroidea</taxon>
        <taxon>Muridae</taxon>
        <taxon>Murinae</taxon>
        <taxon>Mus</taxon>
        <taxon>Mus</taxon>
    </lineage>
</organism>
<dbReference type="EC" id="1.14.11.29" evidence="2"/>
<dbReference type="EMBL" id="AK046783">
    <property type="protein sequence ID" value="BAC32866.1"/>
    <property type="molecule type" value="mRNA"/>
</dbReference>
<dbReference type="EMBL" id="AK047714">
    <property type="protein sequence ID" value="BAC33135.1"/>
    <property type="molecule type" value="mRNA"/>
</dbReference>
<dbReference type="EMBL" id="AK016685">
    <property type="protein sequence ID" value="BAB30379.2"/>
    <property type="status" value="ALT_SEQ"/>
    <property type="molecule type" value="mRNA"/>
</dbReference>
<dbReference type="EMBL" id="AK038927">
    <property type="protein sequence ID" value="BAC30172.1"/>
    <property type="status" value="ALT_SEQ"/>
    <property type="molecule type" value="mRNA"/>
</dbReference>
<dbReference type="CCDS" id="CCDS23533.1">
    <molecule id="Q8BG58-1"/>
</dbReference>
<dbReference type="RefSeq" id="NP_083220.3">
    <molecule id="Q8BG58-1"/>
    <property type="nucleotide sequence ID" value="NM_028944.3"/>
</dbReference>
<dbReference type="SMR" id="Q8BG58"/>
<dbReference type="BioGRID" id="216752">
    <property type="interactions" value="14"/>
</dbReference>
<dbReference type="FunCoup" id="Q8BG58">
    <property type="interactions" value="677"/>
</dbReference>
<dbReference type="STRING" id="10090.ENSMUSP00000006853"/>
<dbReference type="GlyConnect" id="2785">
    <property type="glycosylation" value="4 N-Linked glycans (1 site)"/>
</dbReference>
<dbReference type="GlyCosmos" id="Q8BG58">
    <property type="glycosylation" value="3 sites, 4 glycans"/>
</dbReference>
<dbReference type="GlyGen" id="Q8BG58">
    <property type="glycosylation" value="4 sites, 6 N-linked glycans (2 sites), 1 O-linked glycan (1 site)"/>
</dbReference>
<dbReference type="iPTMnet" id="Q8BG58"/>
<dbReference type="PhosphoSitePlus" id="Q8BG58"/>
<dbReference type="PaxDb" id="10090-ENSMUSP00000006853"/>
<dbReference type="ProteomicsDB" id="294232">
    <molecule id="Q8BG58-1"/>
</dbReference>
<dbReference type="ProteomicsDB" id="294233">
    <molecule id="Q8BG58-2"/>
</dbReference>
<dbReference type="Antibodypedia" id="2007">
    <property type="antibodies" value="230 antibodies from 24 providers"/>
</dbReference>
<dbReference type="Ensembl" id="ENSMUST00000006853.11">
    <molecule id="Q8BG58-1"/>
    <property type="protein sequence ID" value="ENSMUSP00000006853.6"/>
    <property type="gene ID" value="ENSMUSG00000006675.11"/>
</dbReference>
<dbReference type="GeneID" id="74443"/>
<dbReference type="KEGG" id="mmu:74443"/>
<dbReference type="UCSC" id="uc009rqk.1">
    <molecule id="Q8BG58-1"/>
    <property type="organism name" value="mouse"/>
</dbReference>
<dbReference type="UCSC" id="uc009rql.1">
    <molecule id="Q8BG58-2"/>
    <property type="organism name" value="mouse"/>
</dbReference>
<dbReference type="AGR" id="MGI:1921693"/>
<dbReference type="CTD" id="54681"/>
<dbReference type="MGI" id="MGI:1921693">
    <property type="gene designation" value="P4htm"/>
</dbReference>
<dbReference type="VEuPathDB" id="HostDB:ENSMUSG00000006675"/>
<dbReference type="eggNOG" id="KOG1591">
    <property type="taxonomic scope" value="Eukaryota"/>
</dbReference>
<dbReference type="GeneTree" id="ENSGT00390000014570"/>
<dbReference type="HOGENOM" id="CLU_035319_0_0_1"/>
<dbReference type="InParanoid" id="Q8BG58"/>
<dbReference type="OMA" id="MTQAQPC"/>
<dbReference type="OrthoDB" id="420380at2759"/>
<dbReference type="PhylomeDB" id="Q8BG58"/>
<dbReference type="TreeFam" id="TF332923"/>
<dbReference type="BioGRID-ORCS" id="74443">
    <property type="hits" value="0 hits in 77 CRISPR screens"/>
</dbReference>
<dbReference type="ChiTaRS" id="P4htm">
    <property type="organism name" value="mouse"/>
</dbReference>
<dbReference type="PRO" id="PR:Q8BG58"/>
<dbReference type="Proteomes" id="UP000000589">
    <property type="component" value="Chromosome 9"/>
</dbReference>
<dbReference type="RNAct" id="Q8BG58">
    <property type="molecule type" value="protein"/>
</dbReference>
<dbReference type="Bgee" id="ENSMUSG00000006675">
    <property type="expression patterns" value="Expressed in substantia nigra and 190 other cell types or tissues"/>
</dbReference>
<dbReference type="ExpressionAtlas" id="Q8BG58">
    <property type="expression patterns" value="baseline and differential"/>
</dbReference>
<dbReference type="GO" id="GO:0005789">
    <property type="term" value="C:endoplasmic reticulum membrane"/>
    <property type="evidence" value="ECO:0007669"/>
    <property type="project" value="UniProtKB-SubCell"/>
</dbReference>
<dbReference type="GO" id="GO:0016706">
    <property type="term" value="F:2-oxoglutarate-dependent dioxygenase activity"/>
    <property type="evidence" value="ECO:0000266"/>
    <property type="project" value="MGI"/>
</dbReference>
<dbReference type="GO" id="GO:0005509">
    <property type="term" value="F:calcium ion binding"/>
    <property type="evidence" value="ECO:0007669"/>
    <property type="project" value="InterPro"/>
</dbReference>
<dbReference type="GO" id="GO:0160082">
    <property type="term" value="F:hypoxia-inducible factor-proline dioxygenase activity"/>
    <property type="evidence" value="ECO:0007669"/>
    <property type="project" value="UniProtKB-EC"/>
</dbReference>
<dbReference type="GO" id="GO:0005506">
    <property type="term" value="F:iron ion binding"/>
    <property type="evidence" value="ECO:0007669"/>
    <property type="project" value="InterPro"/>
</dbReference>
<dbReference type="GO" id="GO:0031418">
    <property type="term" value="F:L-ascorbic acid binding"/>
    <property type="evidence" value="ECO:0007669"/>
    <property type="project" value="UniProtKB-KW"/>
</dbReference>
<dbReference type="GO" id="GO:0008270">
    <property type="term" value="F:zinc ion binding"/>
    <property type="evidence" value="ECO:0007669"/>
    <property type="project" value="UniProtKB-KW"/>
</dbReference>
<dbReference type="GO" id="GO:0045646">
    <property type="term" value="P:regulation of erythrocyte differentiation"/>
    <property type="evidence" value="ECO:0000315"/>
    <property type="project" value="MGI"/>
</dbReference>
<dbReference type="FunFam" id="1.10.238.10:FF:000141">
    <property type="entry name" value="transmembrane prolyl 4-hydroxylase"/>
    <property type="match status" value="1"/>
</dbReference>
<dbReference type="FunFam" id="2.60.120.620:FF:000008">
    <property type="entry name" value="transmembrane prolyl 4-hydroxylase"/>
    <property type="match status" value="1"/>
</dbReference>
<dbReference type="Gene3D" id="1.10.238.10">
    <property type="entry name" value="EF-hand"/>
    <property type="match status" value="1"/>
</dbReference>
<dbReference type="Gene3D" id="2.60.120.620">
    <property type="entry name" value="q2cbj1_9rhob like domain"/>
    <property type="match status" value="1"/>
</dbReference>
<dbReference type="InterPro" id="IPR011992">
    <property type="entry name" value="EF-hand-dom_pair"/>
</dbReference>
<dbReference type="InterPro" id="IPR018247">
    <property type="entry name" value="EF_Hand_1_Ca_BS"/>
</dbReference>
<dbReference type="InterPro" id="IPR002048">
    <property type="entry name" value="EF_hand_dom"/>
</dbReference>
<dbReference type="InterPro" id="IPR005123">
    <property type="entry name" value="Oxoglu/Fe-dep_dioxygenase_dom"/>
</dbReference>
<dbReference type="InterPro" id="IPR045054">
    <property type="entry name" value="P4HA-like"/>
</dbReference>
<dbReference type="InterPro" id="IPR006620">
    <property type="entry name" value="Pro_4_hyd_alph"/>
</dbReference>
<dbReference type="InterPro" id="IPR044862">
    <property type="entry name" value="Pro_4_hyd_alph_FE2OG_OXY"/>
</dbReference>
<dbReference type="PANTHER" id="PTHR10869">
    <property type="entry name" value="PROLYL 4-HYDROXYLASE ALPHA SUBUNIT"/>
    <property type="match status" value="1"/>
</dbReference>
<dbReference type="PANTHER" id="PTHR10869:SF246">
    <property type="entry name" value="TRANSMEMBRANE PROLYL 4-HYDROXYLASE"/>
    <property type="match status" value="1"/>
</dbReference>
<dbReference type="Pfam" id="PF13640">
    <property type="entry name" value="2OG-FeII_Oxy_3"/>
    <property type="match status" value="1"/>
</dbReference>
<dbReference type="Pfam" id="PF13499">
    <property type="entry name" value="EF-hand_7"/>
    <property type="match status" value="1"/>
</dbReference>
<dbReference type="SMART" id="SM00702">
    <property type="entry name" value="P4Hc"/>
    <property type="match status" value="1"/>
</dbReference>
<dbReference type="SUPFAM" id="SSF47473">
    <property type="entry name" value="EF-hand"/>
    <property type="match status" value="1"/>
</dbReference>
<dbReference type="PROSITE" id="PS00018">
    <property type="entry name" value="EF_HAND_1"/>
    <property type="match status" value="2"/>
</dbReference>
<dbReference type="PROSITE" id="PS51471">
    <property type="entry name" value="FE2OG_OXY"/>
    <property type="match status" value="1"/>
</dbReference>
<comment type="function">
    <text evidence="2">Catalyzes the post-translational formation of 4-hydroxyproline in hypoxia-inducible factor (HIF) alpha proteins. Hydroxylates HIF1A at 'Pro-402' and 'Pro-564'. May function as a cellular oxygen sensor and, under normoxic conditions, may target HIF through the hydroxylation for proteasomal degradation via the von Hippel-Lindau ubiquitination complex.</text>
</comment>
<comment type="catalytic activity">
    <reaction evidence="2">
        <text>L-prolyl-[hypoxia-inducible factor alpha subunit] + 2-oxoglutarate + O2 = trans-4-hydroxy-L-prolyl-[hypoxia-inducible factor alpha subunit] + succinate + CO2</text>
        <dbReference type="Rhea" id="RHEA:48400"/>
        <dbReference type="Rhea" id="RHEA-COMP:12093"/>
        <dbReference type="Rhea" id="RHEA-COMP:12094"/>
        <dbReference type="ChEBI" id="CHEBI:15379"/>
        <dbReference type="ChEBI" id="CHEBI:16526"/>
        <dbReference type="ChEBI" id="CHEBI:16810"/>
        <dbReference type="ChEBI" id="CHEBI:30031"/>
        <dbReference type="ChEBI" id="CHEBI:50342"/>
        <dbReference type="ChEBI" id="CHEBI:61965"/>
        <dbReference type="EC" id="1.14.11.29"/>
    </reaction>
</comment>
<comment type="cofactor">
    <cofactor evidence="4">
        <name>Fe(2+)</name>
        <dbReference type="ChEBI" id="CHEBI:29033"/>
    </cofactor>
    <text evidence="4">Binds 1 Fe(2+) ion per subunit.</text>
</comment>
<comment type="cofactor">
    <cofactor evidence="1">
        <name>L-ascorbate</name>
        <dbReference type="ChEBI" id="CHEBI:38290"/>
    </cofactor>
</comment>
<comment type="subunit">
    <text evidence="2">Homodimer.</text>
</comment>
<comment type="subcellular location">
    <subcellularLocation>
        <location evidence="1">Endoplasmic reticulum membrane</location>
        <topology evidence="1">Single-pass type II membrane protein</topology>
    </subcellularLocation>
</comment>
<comment type="alternative products">
    <event type="alternative splicing"/>
    <isoform>
        <id>Q8BG58-1</id>
        <name>1</name>
        <sequence type="displayed"/>
    </isoform>
    <isoform>
        <id>Q8BG58-2</id>
        <name>2</name>
        <sequence type="described" ref="VSP_007575 VSP_007576"/>
    </isoform>
</comment>
<comment type="tissue specificity">
    <text evidence="7">Highest expression levels are detected in the eye and brain, especially in the retinal epithelium cells and cortical neurons. Also expressed in skeletal muscle, lung, heart, adrenal gland, kidney, prostate, thyroid and testis.</text>
</comment>
<comment type="PTM">
    <text evidence="1">Glycosylated.</text>
</comment>
<comment type="disruption phenotype">
    <text evidence="7">Mutant mice exhibit inflammation and fibrosis of renal tubuli, glomerular sclerosis, enlarged Bowman capsules, and develop late-onset proteinuria. Vision is compromised, primarily due to impairment of cone function.</text>
</comment>
<comment type="sequence caution" evidence="9">
    <conflict type="miscellaneous discrepancy">
        <sequence resource="EMBL-CDS" id="BAB30379"/>
    </conflict>
    <text>Contaminating sequence. Sequence of unknown origin in the N-terminal part.</text>
</comment>
<comment type="sequence caution" evidence="9">
    <conflict type="frameshift">
        <sequence resource="EMBL-CDS" id="BAC30172"/>
    </conflict>
</comment>
<feature type="chain" id="PRO_0000206669" description="Transmembrane prolyl 4-hydroxylase">
    <location>
        <begin position="1"/>
        <end position="503"/>
    </location>
</feature>
<feature type="topological domain" description="Cytoplasmic" evidence="3">
    <location>
        <begin position="1"/>
        <end position="61"/>
    </location>
</feature>
<feature type="transmembrane region" description="Helical; Signal-anchor for type II membrane protein" evidence="3">
    <location>
        <begin position="62"/>
        <end position="82"/>
    </location>
</feature>
<feature type="topological domain" description="Lumenal" evidence="3">
    <location>
        <begin position="83"/>
        <end position="503"/>
    </location>
</feature>
<feature type="domain" description="EF-hand 1">
    <location>
        <begin position="186"/>
        <end position="221"/>
    </location>
</feature>
<feature type="domain" description="EF-hand 2">
    <location>
        <begin position="225"/>
        <end position="260"/>
    </location>
</feature>
<feature type="domain" description="Fe2OG dioxygenase" evidence="4">
    <location>
        <begin position="310"/>
        <end position="461"/>
    </location>
</feature>
<feature type="region of interest" description="Disordered" evidence="6">
    <location>
        <begin position="1"/>
        <end position="49"/>
    </location>
</feature>
<feature type="region of interest" description="Disordered" evidence="6">
    <location>
        <begin position="90"/>
        <end position="110"/>
    </location>
</feature>
<feature type="binding site" evidence="5">
    <location>
        <position position="199"/>
    </location>
    <ligand>
        <name>Ca(2+)</name>
        <dbReference type="ChEBI" id="CHEBI:29108"/>
        <label>1</label>
    </ligand>
</feature>
<feature type="binding site" evidence="5">
    <location>
        <position position="201"/>
    </location>
    <ligand>
        <name>Ca(2+)</name>
        <dbReference type="ChEBI" id="CHEBI:29108"/>
        <label>1</label>
    </ligand>
</feature>
<feature type="binding site" evidence="5">
    <location>
        <position position="203"/>
    </location>
    <ligand>
        <name>Ca(2+)</name>
        <dbReference type="ChEBI" id="CHEBI:29108"/>
        <label>1</label>
    </ligand>
</feature>
<feature type="binding site" evidence="5">
    <location>
        <position position="205"/>
    </location>
    <ligand>
        <name>Ca(2+)</name>
        <dbReference type="ChEBI" id="CHEBI:29108"/>
        <label>1</label>
    </ligand>
</feature>
<feature type="binding site" evidence="5">
    <location>
        <position position="210"/>
    </location>
    <ligand>
        <name>Ca(2+)</name>
        <dbReference type="ChEBI" id="CHEBI:29108"/>
        <label>1</label>
    </ligand>
</feature>
<feature type="binding site" evidence="5">
    <location>
        <position position="238"/>
    </location>
    <ligand>
        <name>Ca(2+)</name>
        <dbReference type="ChEBI" id="CHEBI:29108"/>
        <label>2</label>
    </ligand>
</feature>
<feature type="binding site" evidence="5">
    <location>
        <position position="240"/>
    </location>
    <ligand>
        <name>Ca(2+)</name>
        <dbReference type="ChEBI" id="CHEBI:29108"/>
        <label>2</label>
    </ligand>
</feature>
<feature type="binding site" evidence="5">
    <location>
        <position position="242"/>
    </location>
    <ligand>
        <name>Ca(2+)</name>
        <dbReference type="ChEBI" id="CHEBI:29108"/>
        <label>2</label>
    </ligand>
</feature>
<feature type="binding site" evidence="5">
    <location>
        <position position="249"/>
    </location>
    <ligand>
        <name>Ca(2+)</name>
        <dbReference type="ChEBI" id="CHEBI:29108"/>
        <label>2</label>
    </ligand>
</feature>
<feature type="binding site" evidence="4">
    <location>
        <position position="329"/>
    </location>
    <ligand>
        <name>Fe cation</name>
        <dbReference type="ChEBI" id="CHEBI:24875"/>
    </ligand>
</feature>
<feature type="binding site" evidence="4">
    <location>
        <position position="331"/>
    </location>
    <ligand>
        <name>Fe cation</name>
        <dbReference type="ChEBI" id="CHEBI:24875"/>
    </ligand>
</feature>
<feature type="binding site" evidence="4">
    <location>
        <position position="375"/>
    </location>
    <ligand>
        <name>Fe cation</name>
        <dbReference type="ChEBI" id="CHEBI:24875"/>
    </ligand>
</feature>
<feature type="binding site" evidence="4">
    <location>
        <position position="452"/>
    </location>
    <ligand>
        <name>2-oxoglutarate</name>
        <dbReference type="ChEBI" id="CHEBI:16810"/>
    </ligand>
</feature>
<feature type="glycosylation site" description="N-linked (GlcNAc...) asparagine" evidence="3">
    <location>
        <position position="349"/>
    </location>
</feature>
<feature type="glycosylation site" description="N-linked (GlcNAc...) asparagine" evidence="3">
    <location>
        <position position="369"/>
    </location>
</feature>
<feature type="glycosylation site" description="N-linked (GlcNAc...) asparagine" evidence="3">
    <location>
        <position position="383"/>
    </location>
</feature>
<feature type="splice variant" id="VSP_007575" description="In isoform 2." evidence="8">
    <original>LAQTRLGNGRWMTP</original>
    <variation>RTPPAMWVGTGEN</variation>
    <location>
        <begin position="212"/>
        <end position="225"/>
    </location>
</feature>
<feature type="splice variant" id="VSP_007576" description="In isoform 2." evidence="8">
    <location>
        <begin position="226"/>
        <end position="503"/>
    </location>
</feature>
<reference key="1">
    <citation type="journal article" date="2005" name="Science">
        <title>The transcriptional landscape of the mammalian genome.</title>
        <authorList>
            <person name="Carninci P."/>
            <person name="Kasukawa T."/>
            <person name="Katayama S."/>
            <person name="Gough J."/>
            <person name="Frith M.C."/>
            <person name="Maeda N."/>
            <person name="Oyama R."/>
            <person name="Ravasi T."/>
            <person name="Lenhard B."/>
            <person name="Wells C."/>
            <person name="Kodzius R."/>
            <person name="Shimokawa K."/>
            <person name="Bajic V.B."/>
            <person name="Brenner S.E."/>
            <person name="Batalov S."/>
            <person name="Forrest A.R."/>
            <person name="Zavolan M."/>
            <person name="Davis M.J."/>
            <person name="Wilming L.G."/>
            <person name="Aidinis V."/>
            <person name="Allen J.E."/>
            <person name="Ambesi-Impiombato A."/>
            <person name="Apweiler R."/>
            <person name="Aturaliya R.N."/>
            <person name="Bailey T.L."/>
            <person name="Bansal M."/>
            <person name="Baxter L."/>
            <person name="Beisel K.W."/>
            <person name="Bersano T."/>
            <person name="Bono H."/>
            <person name="Chalk A.M."/>
            <person name="Chiu K.P."/>
            <person name="Choudhary V."/>
            <person name="Christoffels A."/>
            <person name="Clutterbuck D.R."/>
            <person name="Crowe M.L."/>
            <person name="Dalla E."/>
            <person name="Dalrymple B.P."/>
            <person name="de Bono B."/>
            <person name="Della Gatta G."/>
            <person name="di Bernardo D."/>
            <person name="Down T."/>
            <person name="Engstrom P."/>
            <person name="Fagiolini M."/>
            <person name="Faulkner G."/>
            <person name="Fletcher C.F."/>
            <person name="Fukushima T."/>
            <person name="Furuno M."/>
            <person name="Futaki S."/>
            <person name="Gariboldi M."/>
            <person name="Georgii-Hemming P."/>
            <person name="Gingeras T.R."/>
            <person name="Gojobori T."/>
            <person name="Green R.E."/>
            <person name="Gustincich S."/>
            <person name="Harbers M."/>
            <person name="Hayashi Y."/>
            <person name="Hensch T.K."/>
            <person name="Hirokawa N."/>
            <person name="Hill D."/>
            <person name="Huminiecki L."/>
            <person name="Iacono M."/>
            <person name="Ikeo K."/>
            <person name="Iwama A."/>
            <person name="Ishikawa T."/>
            <person name="Jakt M."/>
            <person name="Kanapin A."/>
            <person name="Katoh M."/>
            <person name="Kawasawa Y."/>
            <person name="Kelso J."/>
            <person name="Kitamura H."/>
            <person name="Kitano H."/>
            <person name="Kollias G."/>
            <person name="Krishnan S.P."/>
            <person name="Kruger A."/>
            <person name="Kummerfeld S.K."/>
            <person name="Kurochkin I.V."/>
            <person name="Lareau L.F."/>
            <person name="Lazarevic D."/>
            <person name="Lipovich L."/>
            <person name="Liu J."/>
            <person name="Liuni S."/>
            <person name="McWilliam S."/>
            <person name="Madan Babu M."/>
            <person name="Madera M."/>
            <person name="Marchionni L."/>
            <person name="Matsuda H."/>
            <person name="Matsuzawa S."/>
            <person name="Miki H."/>
            <person name="Mignone F."/>
            <person name="Miyake S."/>
            <person name="Morris K."/>
            <person name="Mottagui-Tabar S."/>
            <person name="Mulder N."/>
            <person name="Nakano N."/>
            <person name="Nakauchi H."/>
            <person name="Ng P."/>
            <person name="Nilsson R."/>
            <person name="Nishiguchi S."/>
            <person name="Nishikawa S."/>
            <person name="Nori F."/>
            <person name="Ohara O."/>
            <person name="Okazaki Y."/>
            <person name="Orlando V."/>
            <person name="Pang K.C."/>
            <person name="Pavan W.J."/>
            <person name="Pavesi G."/>
            <person name="Pesole G."/>
            <person name="Petrovsky N."/>
            <person name="Piazza S."/>
            <person name="Reed J."/>
            <person name="Reid J.F."/>
            <person name="Ring B.Z."/>
            <person name="Ringwald M."/>
            <person name="Rost B."/>
            <person name="Ruan Y."/>
            <person name="Salzberg S.L."/>
            <person name="Sandelin A."/>
            <person name="Schneider C."/>
            <person name="Schoenbach C."/>
            <person name="Sekiguchi K."/>
            <person name="Semple C.A."/>
            <person name="Seno S."/>
            <person name="Sessa L."/>
            <person name="Sheng Y."/>
            <person name="Shibata Y."/>
            <person name="Shimada H."/>
            <person name="Shimada K."/>
            <person name="Silva D."/>
            <person name="Sinclair B."/>
            <person name="Sperling S."/>
            <person name="Stupka E."/>
            <person name="Sugiura K."/>
            <person name="Sultana R."/>
            <person name="Takenaka Y."/>
            <person name="Taki K."/>
            <person name="Tammoja K."/>
            <person name="Tan S.L."/>
            <person name="Tang S."/>
            <person name="Taylor M.S."/>
            <person name="Tegner J."/>
            <person name="Teichmann S.A."/>
            <person name="Ueda H.R."/>
            <person name="van Nimwegen E."/>
            <person name="Verardo R."/>
            <person name="Wei C.L."/>
            <person name="Yagi K."/>
            <person name="Yamanishi H."/>
            <person name="Zabarovsky E."/>
            <person name="Zhu S."/>
            <person name="Zimmer A."/>
            <person name="Hide W."/>
            <person name="Bult C."/>
            <person name="Grimmond S.M."/>
            <person name="Teasdale R.D."/>
            <person name="Liu E.T."/>
            <person name="Brusic V."/>
            <person name="Quackenbush J."/>
            <person name="Wahlestedt C."/>
            <person name="Mattick J.S."/>
            <person name="Hume D.A."/>
            <person name="Kai C."/>
            <person name="Sasaki D."/>
            <person name="Tomaru Y."/>
            <person name="Fukuda S."/>
            <person name="Kanamori-Katayama M."/>
            <person name="Suzuki M."/>
            <person name="Aoki J."/>
            <person name="Arakawa T."/>
            <person name="Iida J."/>
            <person name="Imamura K."/>
            <person name="Itoh M."/>
            <person name="Kato T."/>
            <person name="Kawaji H."/>
            <person name="Kawagashira N."/>
            <person name="Kawashima T."/>
            <person name="Kojima M."/>
            <person name="Kondo S."/>
            <person name="Konno H."/>
            <person name="Nakano K."/>
            <person name="Ninomiya N."/>
            <person name="Nishio T."/>
            <person name="Okada M."/>
            <person name="Plessy C."/>
            <person name="Shibata K."/>
            <person name="Shiraki T."/>
            <person name="Suzuki S."/>
            <person name="Tagami M."/>
            <person name="Waki K."/>
            <person name="Watahiki A."/>
            <person name="Okamura-Oho Y."/>
            <person name="Suzuki H."/>
            <person name="Kawai J."/>
            <person name="Hayashizaki Y."/>
        </authorList>
    </citation>
    <scope>NUCLEOTIDE SEQUENCE [LARGE SCALE MRNA] (ISOFORMS 1 AND 2)</scope>
    <source>
        <strain>C57BL/6J</strain>
        <tissue>Corpus striatum</tissue>
        <tissue>Medulla oblongata</tissue>
        <tissue>Testis</tissue>
    </source>
</reference>
<reference key="2">
    <citation type="journal article" date="2010" name="Cell">
        <title>A tissue-specific atlas of mouse protein phosphorylation and expression.</title>
        <authorList>
            <person name="Huttlin E.L."/>
            <person name="Jedrychowski M.P."/>
            <person name="Elias J.E."/>
            <person name="Goswami T."/>
            <person name="Rad R."/>
            <person name="Beausoleil S.A."/>
            <person name="Villen J."/>
            <person name="Haas W."/>
            <person name="Sowa M.E."/>
            <person name="Gygi S.P."/>
        </authorList>
    </citation>
    <scope>IDENTIFICATION BY MASS SPECTROMETRY [LARGE SCALE ANALYSIS]</scope>
    <source>
        <tissue>Brain</tissue>
    </source>
</reference>
<reference key="3">
    <citation type="journal article" date="2016" name="Hum. Mol. Genet.">
        <title>Lack of P4H-TM in mice results in age-related retinal and renal alterations.</title>
        <authorList>
            <person name="Leinonen H."/>
            <person name="Rossi M."/>
            <person name="Salo A.M."/>
            <person name="Tiainen P."/>
            <person name="Hyvaerinen J."/>
            <person name="Pitkaenen M."/>
            <person name="Sormunen R."/>
            <person name="Miinalainen I."/>
            <person name="Zhang C."/>
            <person name="Soininen R."/>
            <person name="Kivirikko K.I."/>
            <person name="Koskelainen A."/>
            <person name="Tanila H."/>
            <person name="Myllyharju J."/>
            <person name="Koivunen P."/>
        </authorList>
    </citation>
    <scope>TISSUE SPECIFICITY</scope>
    <scope>DISRUPTION PHENOTYPE</scope>
</reference>